<proteinExistence type="inferred from homology"/>
<evidence type="ECO:0000255" key="1">
    <source>
        <dbReference type="HAMAP-Rule" id="MF_01813"/>
    </source>
</evidence>
<name>UBIE_RUEST</name>
<keyword id="KW-0474">Menaquinone biosynthesis</keyword>
<keyword id="KW-0489">Methyltransferase</keyword>
<keyword id="KW-1185">Reference proteome</keyword>
<keyword id="KW-0949">S-adenosyl-L-methionine</keyword>
<keyword id="KW-0808">Transferase</keyword>
<keyword id="KW-0831">Ubiquinone biosynthesis</keyword>
<feature type="chain" id="PRO_1000187815" description="Ubiquinone/menaquinone biosynthesis C-methyltransferase UbiE">
    <location>
        <begin position="1"/>
        <end position="250"/>
    </location>
</feature>
<feature type="binding site" evidence="1">
    <location>
        <position position="74"/>
    </location>
    <ligand>
        <name>S-adenosyl-L-methionine</name>
        <dbReference type="ChEBI" id="CHEBI:59789"/>
    </ligand>
</feature>
<feature type="binding site" evidence="1">
    <location>
        <position position="94"/>
    </location>
    <ligand>
        <name>S-adenosyl-L-methionine</name>
        <dbReference type="ChEBI" id="CHEBI:59789"/>
    </ligand>
</feature>
<feature type="binding site" evidence="1">
    <location>
        <begin position="122"/>
        <end position="123"/>
    </location>
    <ligand>
        <name>S-adenosyl-L-methionine</name>
        <dbReference type="ChEBI" id="CHEBI:59789"/>
    </ligand>
</feature>
<feature type="binding site" evidence="1">
    <location>
        <position position="139"/>
    </location>
    <ligand>
        <name>S-adenosyl-L-methionine</name>
        <dbReference type="ChEBI" id="CHEBI:59789"/>
    </ligand>
</feature>
<gene>
    <name evidence="1" type="primary">ubiE</name>
    <name type="ordered locus">TM1040_3028</name>
</gene>
<organism>
    <name type="scientific">Ruegeria sp. (strain TM1040)</name>
    <name type="common">Silicibacter sp.</name>
    <dbReference type="NCBI Taxonomy" id="292414"/>
    <lineage>
        <taxon>Bacteria</taxon>
        <taxon>Pseudomonadati</taxon>
        <taxon>Pseudomonadota</taxon>
        <taxon>Alphaproteobacteria</taxon>
        <taxon>Rhodobacterales</taxon>
        <taxon>Roseobacteraceae</taxon>
        <taxon>Ruegeria</taxon>
    </lineage>
</organism>
<comment type="function">
    <text evidence="1">Methyltransferase required for the conversion of demethylmenaquinol (DMKH2) to menaquinol (MKH2) and the conversion of 2-polyprenyl-6-methoxy-1,4-benzoquinol (DDMQH2) to 2-polyprenyl-3-methyl-6-methoxy-1,4-benzoquinol (DMQH2).</text>
</comment>
<comment type="catalytic activity">
    <reaction evidence="1">
        <text>a 2-demethylmenaquinol + S-adenosyl-L-methionine = a menaquinol + S-adenosyl-L-homocysteine + H(+)</text>
        <dbReference type="Rhea" id="RHEA:42640"/>
        <dbReference type="Rhea" id="RHEA-COMP:9539"/>
        <dbReference type="Rhea" id="RHEA-COMP:9563"/>
        <dbReference type="ChEBI" id="CHEBI:15378"/>
        <dbReference type="ChEBI" id="CHEBI:18151"/>
        <dbReference type="ChEBI" id="CHEBI:55437"/>
        <dbReference type="ChEBI" id="CHEBI:57856"/>
        <dbReference type="ChEBI" id="CHEBI:59789"/>
        <dbReference type="EC" id="2.1.1.163"/>
    </reaction>
</comment>
<comment type="catalytic activity">
    <reaction evidence="1">
        <text>a 2-methoxy-6-(all-trans-polyprenyl)benzene-1,4-diol + S-adenosyl-L-methionine = a 5-methoxy-2-methyl-3-(all-trans-polyprenyl)benzene-1,4-diol + S-adenosyl-L-homocysteine + H(+)</text>
        <dbReference type="Rhea" id="RHEA:28286"/>
        <dbReference type="Rhea" id="RHEA-COMP:10858"/>
        <dbReference type="Rhea" id="RHEA-COMP:10859"/>
        <dbReference type="ChEBI" id="CHEBI:15378"/>
        <dbReference type="ChEBI" id="CHEBI:57856"/>
        <dbReference type="ChEBI" id="CHEBI:59789"/>
        <dbReference type="ChEBI" id="CHEBI:84166"/>
        <dbReference type="ChEBI" id="CHEBI:84167"/>
        <dbReference type="EC" id="2.1.1.201"/>
    </reaction>
</comment>
<comment type="pathway">
    <text evidence="1">Quinol/quinone metabolism; menaquinone biosynthesis; menaquinol from 1,4-dihydroxy-2-naphthoate: step 2/2.</text>
</comment>
<comment type="pathway">
    <text evidence="1">Cofactor biosynthesis; ubiquinone biosynthesis.</text>
</comment>
<comment type="similarity">
    <text evidence="1">Belongs to the class I-like SAM-binding methyltransferase superfamily. MenG/UbiE family.</text>
</comment>
<protein>
    <recommendedName>
        <fullName evidence="1">Ubiquinone/menaquinone biosynthesis C-methyltransferase UbiE</fullName>
        <ecNumber evidence="1">2.1.1.163</ecNumber>
        <ecNumber evidence="1">2.1.1.201</ecNumber>
    </recommendedName>
    <alternativeName>
        <fullName evidence="1">2-methoxy-6-polyprenyl-1,4-benzoquinol methylase</fullName>
    </alternativeName>
    <alternativeName>
        <fullName evidence="1">Demethylmenaquinone methyltransferase</fullName>
    </alternativeName>
</protein>
<dbReference type="EC" id="2.1.1.163" evidence="1"/>
<dbReference type="EC" id="2.1.1.201" evidence="1"/>
<dbReference type="EMBL" id="CP000377">
    <property type="protein sequence ID" value="ABF65760.1"/>
    <property type="molecule type" value="Genomic_DNA"/>
</dbReference>
<dbReference type="RefSeq" id="WP_011540338.1">
    <property type="nucleotide sequence ID" value="NC_008044.1"/>
</dbReference>
<dbReference type="SMR" id="Q1GC56"/>
<dbReference type="STRING" id="292414.TM1040_3028"/>
<dbReference type="KEGG" id="sit:TM1040_3028"/>
<dbReference type="eggNOG" id="COG2226">
    <property type="taxonomic scope" value="Bacteria"/>
</dbReference>
<dbReference type="HOGENOM" id="CLU_037990_0_0_5"/>
<dbReference type="OrthoDB" id="9808140at2"/>
<dbReference type="UniPathway" id="UPA00079">
    <property type="reaction ID" value="UER00169"/>
</dbReference>
<dbReference type="UniPathway" id="UPA00232"/>
<dbReference type="Proteomes" id="UP000000636">
    <property type="component" value="Chromosome"/>
</dbReference>
<dbReference type="GO" id="GO:0008425">
    <property type="term" value="F:2-methoxy-6-polyprenyl-1,4-benzoquinol methyltransferase activity"/>
    <property type="evidence" value="ECO:0007669"/>
    <property type="project" value="UniProtKB-UniRule"/>
</dbReference>
<dbReference type="GO" id="GO:0043770">
    <property type="term" value="F:demethylmenaquinone methyltransferase activity"/>
    <property type="evidence" value="ECO:0007669"/>
    <property type="project" value="UniProtKB-UniRule"/>
</dbReference>
<dbReference type="GO" id="GO:0009060">
    <property type="term" value="P:aerobic respiration"/>
    <property type="evidence" value="ECO:0007669"/>
    <property type="project" value="UniProtKB-UniRule"/>
</dbReference>
<dbReference type="GO" id="GO:0009234">
    <property type="term" value="P:menaquinone biosynthetic process"/>
    <property type="evidence" value="ECO:0007669"/>
    <property type="project" value="UniProtKB-UniRule"/>
</dbReference>
<dbReference type="GO" id="GO:0032259">
    <property type="term" value="P:methylation"/>
    <property type="evidence" value="ECO:0007669"/>
    <property type="project" value="UniProtKB-KW"/>
</dbReference>
<dbReference type="CDD" id="cd02440">
    <property type="entry name" value="AdoMet_MTases"/>
    <property type="match status" value="1"/>
</dbReference>
<dbReference type="FunFam" id="3.40.50.150:FF:000064">
    <property type="entry name" value="2-methoxy-6-polyprenyl-1,4-benzoquinol methylase, mitochondrial"/>
    <property type="match status" value="1"/>
</dbReference>
<dbReference type="Gene3D" id="3.40.50.150">
    <property type="entry name" value="Vaccinia Virus protein VP39"/>
    <property type="match status" value="1"/>
</dbReference>
<dbReference type="HAMAP" id="MF_01813">
    <property type="entry name" value="MenG_UbiE_methyltr"/>
    <property type="match status" value="1"/>
</dbReference>
<dbReference type="InterPro" id="IPR029063">
    <property type="entry name" value="SAM-dependent_MTases_sf"/>
</dbReference>
<dbReference type="InterPro" id="IPR004033">
    <property type="entry name" value="UbiE/COQ5_MeTrFase"/>
</dbReference>
<dbReference type="InterPro" id="IPR023576">
    <property type="entry name" value="UbiE/COQ5_MeTrFase_CS"/>
</dbReference>
<dbReference type="NCBIfam" id="TIGR01934">
    <property type="entry name" value="MenG_MenH_UbiE"/>
    <property type="match status" value="1"/>
</dbReference>
<dbReference type="NCBIfam" id="NF001242">
    <property type="entry name" value="PRK00216.1-3"/>
    <property type="match status" value="1"/>
</dbReference>
<dbReference type="NCBIfam" id="NF001244">
    <property type="entry name" value="PRK00216.1-5"/>
    <property type="match status" value="1"/>
</dbReference>
<dbReference type="PANTHER" id="PTHR43591:SF24">
    <property type="entry name" value="2-METHOXY-6-POLYPRENYL-1,4-BENZOQUINOL METHYLASE, MITOCHONDRIAL"/>
    <property type="match status" value="1"/>
</dbReference>
<dbReference type="PANTHER" id="PTHR43591">
    <property type="entry name" value="METHYLTRANSFERASE"/>
    <property type="match status" value="1"/>
</dbReference>
<dbReference type="Pfam" id="PF01209">
    <property type="entry name" value="Ubie_methyltran"/>
    <property type="match status" value="1"/>
</dbReference>
<dbReference type="SUPFAM" id="SSF53335">
    <property type="entry name" value="S-adenosyl-L-methionine-dependent methyltransferases"/>
    <property type="match status" value="1"/>
</dbReference>
<dbReference type="PROSITE" id="PS51608">
    <property type="entry name" value="SAM_MT_UBIE"/>
    <property type="match status" value="1"/>
</dbReference>
<dbReference type="PROSITE" id="PS01183">
    <property type="entry name" value="UBIE_1"/>
    <property type="match status" value="1"/>
</dbReference>
<dbReference type="PROSITE" id="PS01184">
    <property type="entry name" value="UBIE_2"/>
    <property type="match status" value="1"/>
</dbReference>
<reference key="1">
    <citation type="submission" date="2006-05" db="EMBL/GenBank/DDBJ databases">
        <title>Complete sequence of chromosome of Silicibacter sp. TM1040.</title>
        <authorList>
            <consortium name="US DOE Joint Genome Institute"/>
            <person name="Copeland A."/>
            <person name="Lucas S."/>
            <person name="Lapidus A."/>
            <person name="Barry K."/>
            <person name="Detter J.C."/>
            <person name="Glavina del Rio T."/>
            <person name="Hammon N."/>
            <person name="Israni S."/>
            <person name="Dalin E."/>
            <person name="Tice H."/>
            <person name="Pitluck S."/>
            <person name="Brettin T."/>
            <person name="Bruce D."/>
            <person name="Han C."/>
            <person name="Tapia R."/>
            <person name="Goodwin L."/>
            <person name="Thompson L.S."/>
            <person name="Gilna P."/>
            <person name="Schmutz J."/>
            <person name="Larimer F."/>
            <person name="Land M."/>
            <person name="Hauser L."/>
            <person name="Kyrpides N."/>
            <person name="Kim E."/>
            <person name="Belas R."/>
            <person name="Moran M.A."/>
            <person name="Buchan A."/>
            <person name="Gonzalez J.M."/>
            <person name="Schell M.A."/>
            <person name="Sun F."/>
            <person name="Richardson P."/>
        </authorList>
    </citation>
    <scope>NUCLEOTIDE SEQUENCE [LARGE SCALE GENOMIC DNA]</scope>
    <source>
        <strain>TM1040</strain>
    </source>
</reference>
<accession>Q1GC56</accession>
<sequence length="250" mass="28152">MTEKSDSTTHFGFETVPEHEKAGRVQGVFNSVASKYDIMNDVMSVGIHRIWKDAMMDWLAPRPGQRLLDVAGGTGDISFRFLKRAGHGHSTVLDLTTPMLEEGRKRAEAEQMAECLDWVTGDAMALPFKDNTFDVYTISFGIRNVTRPQEALNEAYRVLKPGGRLMVLEFSQLPNDGLQKLYDLYSFNVIPRMGQMIAGDYDSYQYLVESIRNFPDQETFLGMVKSAGFENAKHRNLSMGIAALHSGWKI</sequence>